<sequence length="351" mass="39422">MESNYSIHLNGSEVVVYDSTISRVLWILSMVVVSITFFLGVLGNGLVIWVAGFRMPHTVTTIWYLNLALADFSFTATLPFLLVEMAMKEKWPFGWFLCKLVHIVVDVNLFGSVFLIALIALDRCICVLHPVWAQNHRTVSLARKVVVGPWIFALILTLPIFIFLTTVRIPGGDVYCTFNFGSWAQTDEEKLNTAITFVTTRGIIRFLIGFSMPMSIVAVCYGLIAVKINRRNLVNSSRPLRVLTAVVASFFICWFPFQLVALLGTVWFKETLLSGSYKILDMFVNPTSSLAYFNSCLNPMLYVFMGQDFRERFIHSLPYSLERALSEDSGQTSDSSTSSTSPPADIELKAP</sequence>
<keyword id="KW-1003">Cell membrane</keyword>
<keyword id="KW-0145">Chemotaxis</keyword>
<keyword id="KW-1015">Disulfide bond</keyword>
<keyword id="KW-0297">G-protein coupled receptor</keyword>
<keyword id="KW-0325">Glycoprotein</keyword>
<keyword id="KW-0472">Membrane</keyword>
<keyword id="KW-0675">Receptor</keyword>
<keyword id="KW-1185">Reference proteome</keyword>
<keyword id="KW-0807">Transducer</keyword>
<keyword id="KW-0812">Transmembrane</keyword>
<keyword id="KW-1133">Transmembrane helix</keyword>
<accession>O88536</accession>
<dbReference type="EMBL" id="AF071180">
    <property type="protein sequence ID" value="AAC34585.1"/>
    <property type="molecule type" value="Genomic_DNA"/>
</dbReference>
<dbReference type="EMBL" id="AY138248">
    <property type="protein sequence ID" value="AAN06932.1"/>
    <property type="molecule type" value="Genomic_DNA"/>
</dbReference>
<dbReference type="EMBL" id="CH466642">
    <property type="protein sequence ID" value="EDL20513.1"/>
    <property type="molecule type" value="Genomic_DNA"/>
</dbReference>
<dbReference type="EMBL" id="BC117066">
    <property type="protein sequence ID" value="AAI17067.1"/>
    <property type="molecule type" value="mRNA"/>
</dbReference>
<dbReference type="CCDS" id="CCDS28419.1"/>
<dbReference type="RefSeq" id="NP_032065.1">
    <property type="nucleotide sequence ID" value="NM_008039.2"/>
</dbReference>
<dbReference type="SMR" id="O88536"/>
<dbReference type="BioGRID" id="199733">
    <property type="interactions" value="1"/>
</dbReference>
<dbReference type="FunCoup" id="O88536">
    <property type="interactions" value="506"/>
</dbReference>
<dbReference type="STRING" id="10090.ENSMUSP00000065799"/>
<dbReference type="BindingDB" id="O88536"/>
<dbReference type="ChEMBL" id="CHEMBL4739842"/>
<dbReference type="GuidetoPHARMACOLOGY" id="223"/>
<dbReference type="GlyCosmos" id="O88536">
    <property type="glycosylation" value="2 sites, No reported glycans"/>
</dbReference>
<dbReference type="GlyGen" id="O88536">
    <property type="glycosylation" value="2 sites"/>
</dbReference>
<dbReference type="PhosphoSitePlus" id="O88536"/>
<dbReference type="PaxDb" id="10090-ENSMUSP00000065799"/>
<dbReference type="ProteomicsDB" id="267407"/>
<dbReference type="DNASU" id="14289"/>
<dbReference type="Ensembl" id="ENSMUST00000064068.5">
    <property type="protein sequence ID" value="ENSMUSP00000065799.5"/>
    <property type="gene ID" value="ENSMUSG00000052270.8"/>
</dbReference>
<dbReference type="GeneID" id="14289"/>
<dbReference type="KEGG" id="mmu:14289"/>
<dbReference type="UCSC" id="uc008apu.1">
    <property type="organism name" value="mouse"/>
</dbReference>
<dbReference type="AGR" id="MGI:1278319"/>
<dbReference type="CTD" id="2358"/>
<dbReference type="MGI" id="MGI:1278319">
    <property type="gene designation" value="Fpr2"/>
</dbReference>
<dbReference type="VEuPathDB" id="HostDB:ENSMUSG00000052270"/>
<dbReference type="eggNOG" id="KOG3656">
    <property type="taxonomic scope" value="Eukaryota"/>
</dbReference>
<dbReference type="GeneTree" id="ENSGT01020000230438"/>
<dbReference type="HOGENOM" id="CLU_009579_8_0_1"/>
<dbReference type="InParanoid" id="O88536"/>
<dbReference type="OMA" id="NVTHCYN"/>
<dbReference type="OrthoDB" id="6088892at2759"/>
<dbReference type="PhylomeDB" id="O88536"/>
<dbReference type="TreeFam" id="TF330976"/>
<dbReference type="Reactome" id="R-MMU-416476">
    <property type="pathway name" value="G alpha (q) signalling events"/>
</dbReference>
<dbReference type="Reactome" id="R-MMU-418594">
    <property type="pathway name" value="G alpha (i) signalling events"/>
</dbReference>
<dbReference type="Reactome" id="R-MMU-444473">
    <property type="pathway name" value="Formyl peptide receptors bind formyl peptides and many other ligands"/>
</dbReference>
<dbReference type="Reactome" id="R-MMU-6798695">
    <property type="pathway name" value="Neutrophil degranulation"/>
</dbReference>
<dbReference type="BioGRID-ORCS" id="14289">
    <property type="hits" value="2 hits in 76 CRISPR screens"/>
</dbReference>
<dbReference type="PRO" id="PR:O88536"/>
<dbReference type="Proteomes" id="UP000000589">
    <property type="component" value="Chromosome 17"/>
</dbReference>
<dbReference type="RNAct" id="O88536">
    <property type="molecule type" value="protein"/>
</dbReference>
<dbReference type="Bgee" id="ENSMUSG00000052270">
    <property type="expression patterns" value="Expressed in granulocyte and 70 other cell types or tissues"/>
</dbReference>
<dbReference type="ExpressionAtlas" id="O88536">
    <property type="expression patterns" value="baseline and differential"/>
</dbReference>
<dbReference type="GO" id="GO:0005886">
    <property type="term" value="C:plasma membrane"/>
    <property type="evidence" value="ECO:0007669"/>
    <property type="project" value="UniProtKB-SubCell"/>
</dbReference>
<dbReference type="GO" id="GO:0001540">
    <property type="term" value="F:amyloid-beta binding"/>
    <property type="evidence" value="ECO:0000353"/>
    <property type="project" value="ARUK-UCL"/>
</dbReference>
<dbReference type="GO" id="GO:0004982">
    <property type="term" value="F:N-formyl peptide receptor activity"/>
    <property type="evidence" value="ECO:0000314"/>
    <property type="project" value="MGI"/>
</dbReference>
<dbReference type="GO" id="GO:0038023">
    <property type="term" value="F:signaling receptor activity"/>
    <property type="evidence" value="ECO:0000314"/>
    <property type="project" value="MGI"/>
</dbReference>
<dbReference type="GO" id="GO:1904646">
    <property type="term" value="P:cellular response to amyloid-beta"/>
    <property type="evidence" value="ECO:0000314"/>
    <property type="project" value="ARUK-UCL"/>
</dbReference>
<dbReference type="GO" id="GO:0007200">
    <property type="term" value="P:phospholipase C-activating G protein-coupled receptor signaling pathway"/>
    <property type="evidence" value="ECO:0000314"/>
    <property type="project" value="MGI"/>
</dbReference>
<dbReference type="GO" id="GO:0050918">
    <property type="term" value="P:positive chemotaxis"/>
    <property type="evidence" value="ECO:0000316"/>
    <property type="project" value="ARUK-UCL"/>
</dbReference>
<dbReference type="GO" id="GO:0032930">
    <property type="term" value="P:positive regulation of superoxide anion generation"/>
    <property type="evidence" value="ECO:0000316"/>
    <property type="project" value="ARUK-UCL"/>
</dbReference>
<dbReference type="FunFam" id="1.20.1070.10:FF:000034">
    <property type="entry name" value="G-protein coupled receptor 1"/>
    <property type="match status" value="1"/>
</dbReference>
<dbReference type="Gene3D" id="1.20.1070.10">
    <property type="entry name" value="Rhodopsin 7-helix transmembrane proteins"/>
    <property type="match status" value="1"/>
</dbReference>
<dbReference type="InterPro" id="IPR000826">
    <property type="entry name" value="Formyl_rcpt-rel"/>
</dbReference>
<dbReference type="InterPro" id="IPR000276">
    <property type="entry name" value="GPCR_Rhodpsn"/>
</dbReference>
<dbReference type="InterPro" id="IPR017452">
    <property type="entry name" value="GPCR_Rhodpsn_7TM"/>
</dbReference>
<dbReference type="PANTHER" id="PTHR24225">
    <property type="entry name" value="CHEMOTACTIC RECEPTOR"/>
    <property type="match status" value="1"/>
</dbReference>
<dbReference type="PANTHER" id="PTHR24225:SF0">
    <property type="entry name" value="N-FORMYL PEPTIDE RECEPTOR 2"/>
    <property type="match status" value="1"/>
</dbReference>
<dbReference type="Pfam" id="PF00001">
    <property type="entry name" value="7tm_1"/>
    <property type="match status" value="1"/>
</dbReference>
<dbReference type="PRINTS" id="PR00526">
    <property type="entry name" value="FMETLEUPHER"/>
</dbReference>
<dbReference type="PRINTS" id="PR00237">
    <property type="entry name" value="GPCRRHODOPSN"/>
</dbReference>
<dbReference type="SUPFAM" id="SSF81321">
    <property type="entry name" value="Family A G protein-coupled receptor-like"/>
    <property type="match status" value="1"/>
</dbReference>
<dbReference type="PROSITE" id="PS00237">
    <property type="entry name" value="G_PROTEIN_RECEP_F1_1"/>
    <property type="match status" value="1"/>
</dbReference>
<dbReference type="PROSITE" id="PS50262">
    <property type="entry name" value="G_PROTEIN_RECEP_F1_2"/>
    <property type="match status" value="1"/>
</dbReference>
<reference key="1">
    <citation type="journal article" date="1998" name="Genomics">
        <title>Differential expansion of the N-formylpeptide receptor gene cluster in human and mouse.</title>
        <authorList>
            <person name="Gao J.-L."/>
            <person name="Chen H."/>
            <person name="Filie J.D."/>
            <person name="Kozak C.A."/>
            <person name="Murphy P.M."/>
        </authorList>
    </citation>
    <scope>NUCLEOTIDE SEQUENCE [GENOMIC DNA]</scope>
</reference>
<reference key="2">
    <citation type="journal article" date="2002" name="J. Immunol.">
        <title>Identification, cloning, and functional characterization of a murine lipoxin A4 receptor homologue gene.</title>
        <authorList>
            <person name="Vaughn M.W."/>
            <person name="Proske R.J."/>
            <person name="Haviland D.L."/>
        </authorList>
    </citation>
    <scope>NUCLEOTIDE SEQUENCE [GENOMIC DNA]</scope>
    <scope>FUNCTION</scope>
    <source>
        <strain>B10.A</strain>
    </source>
</reference>
<reference key="3">
    <citation type="submission" date="2005-07" db="EMBL/GenBank/DDBJ databases">
        <authorList>
            <person name="Mural R.J."/>
            <person name="Adams M.D."/>
            <person name="Myers E.W."/>
            <person name="Smith H.O."/>
            <person name="Venter J.C."/>
        </authorList>
    </citation>
    <scope>NUCLEOTIDE SEQUENCE [LARGE SCALE GENOMIC DNA]</scope>
</reference>
<reference key="4">
    <citation type="journal article" date="2004" name="Genome Res.">
        <title>The status, quality, and expansion of the NIH full-length cDNA project: the Mammalian Gene Collection (MGC).</title>
        <authorList>
            <consortium name="The MGC Project Team"/>
        </authorList>
    </citation>
    <scope>NUCLEOTIDE SEQUENCE [LARGE SCALE MRNA]</scope>
    <source>
        <tissue>Brain</tissue>
    </source>
</reference>
<reference key="5">
    <citation type="journal article" date="1999" name="J. Exp. Med.">
        <title>N-formylpeptides induce two distinct concentration optima for mouse neutrophil chemotaxis by differential interaction with two N-formylpeptide receptor (FPR) subtypes. Molecular characterization of FPR2, a second mouse neutrophil FPR.</title>
        <authorList>
            <person name="Hartt J.K."/>
            <person name="Barish G."/>
            <person name="Murphy P.M."/>
            <person name="Gao J.L."/>
        </authorList>
    </citation>
    <scope>FUNCTION</scope>
    <scope>TISSUE SPECIFICITY</scope>
</reference>
<reference key="6">
    <citation type="journal article" date="2005" name="J. Immunol.">
        <title>Mouse cathelin-related antimicrobial peptide chemoattracts leukocytes using formyl peptide receptor-like 1/mouse formyl peptide receptor-like 2 as the receptor and acts as an immune adjuvant.</title>
        <authorList>
            <person name="Kurosaka K."/>
            <person name="Chen Q."/>
            <person name="Yarovinsky F."/>
            <person name="Oppenheim J.J."/>
            <person name="Yang D."/>
        </authorList>
    </citation>
    <scope>TISSUE SPECIFICITY</scope>
    <scope>LIGAND-BINDING</scope>
</reference>
<reference key="7">
    <citation type="journal article" date="2007" name="J. Immunol.">
        <title>F2L, a peptide derived from heme-binding protein, chemoattracts mouse neutrophils by specifically activating Fpr2, the low-affinity N-formylpeptide receptor.</title>
        <authorList>
            <person name="Gao J.L."/>
            <person name="Guillabert A."/>
            <person name="Hu J."/>
            <person name="Le Y."/>
            <person name="Urizar E."/>
            <person name="Seligman E."/>
            <person name="Fang K.J."/>
            <person name="Yuan X."/>
            <person name="Imbault V."/>
            <person name="Communi D."/>
            <person name="Wang J.M."/>
            <person name="Parmentier M."/>
            <person name="Murphy P.M."/>
            <person name="Migeotte I."/>
        </authorList>
    </citation>
    <scope>TISSUE SPECIFICITY</scope>
    <scope>LIGAND-BINDING</scope>
</reference>
<reference key="8">
    <citation type="journal article" date="2009" name="Nature">
        <title>Formyl peptide receptor-like proteins are a novel family of vomeronasal chemosensors.</title>
        <authorList>
            <person name="Riviere S."/>
            <person name="Challet L."/>
            <person name="Fluegge D."/>
            <person name="Spehr M."/>
            <person name="Rodriguez I."/>
        </authorList>
    </citation>
    <scope>FUNCTION</scope>
    <scope>TISSUE SPECIFICITY</scope>
</reference>
<reference key="9">
    <citation type="journal article" date="2009" name="Proc. Natl. Acad. Sci. U.S.A.">
        <title>Formyl peptide receptors are candidate chemosensory receptors in the vomeronasal organ.</title>
        <authorList>
            <person name="Liberles S.D."/>
            <person name="Horowitz L.F."/>
            <person name="Kuang D."/>
            <person name="Contos J.J."/>
            <person name="Wilson K.L."/>
            <person name="Siltberg-Liberles J."/>
            <person name="Liberles D.A."/>
            <person name="Buck L.B."/>
        </authorList>
    </citation>
    <scope>TISSUE SPECIFICITY</scope>
</reference>
<reference key="10">
    <citation type="journal article" date="2017" name="Sci. Rep.">
        <title>FAM19A5, a brain-specific chemokine, inhibits RANKL-induced osteoclast formation through formyl peptide receptor 2.</title>
        <authorList>
            <person name="Park M.Y."/>
            <person name="Kim H.S."/>
            <person name="Lee M."/>
            <person name="Park B."/>
            <person name="Lee H.Y."/>
            <person name="Cho E.B."/>
            <person name="Seong J.Y."/>
            <person name="Bae Y.S."/>
        </authorList>
    </citation>
    <scope>FUNCTION</scope>
    <scope>DISRUPTION PHENOTYPE</scope>
</reference>
<proteinExistence type="evidence at protein level"/>
<evidence type="ECO:0000250" key="1">
    <source>
        <dbReference type="UniProtKB" id="P25090"/>
    </source>
</evidence>
<evidence type="ECO:0000255" key="2"/>
<evidence type="ECO:0000255" key="3">
    <source>
        <dbReference type="PROSITE-ProRule" id="PRU00521"/>
    </source>
</evidence>
<evidence type="ECO:0000256" key="4">
    <source>
        <dbReference type="SAM" id="MobiDB-lite"/>
    </source>
</evidence>
<evidence type="ECO:0000269" key="5">
    <source>
    </source>
</evidence>
<evidence type="ECO:0000269" key="6">
    <source>
    </source>
</evidence>
<evidence type="ECO:0000269" key="7">
    <source>
    </source>
</evidence>
<evidence type="ECO:0000269" key="8">
    <source>
    </source>
</evidence>
<evidence type="ECO:0000269" key="9">
    <source>
    </source>
</evidence>
<evidence type="ECO:0000269" key="10">
    <source>
    </source>
</evidence>
<evidence type="ECO:0000269" key="11">
    <source>
    </source>
</evidence>
<evidence type="ECO:0000305" key="12"/>
<gene>
    <name type="primary">Fpr2</name>
    <name type="synonym">Fpr-rs2</name>
</gene>
<organism>
    <name type="scientific">Mus musculus</name>
    <name type="common">Mouse</name>
    <dbReference type="NCBI Taxonomy" id="10090"/>
    <lineage>
        <taxon>Eukaryota</taxon>
        <taxon>Metazoa</taxon>
        <taxon>Chordata</taxon>
        <taxon>Craniata</taxon>
        <taxon>Vertebrata</taxon>
        <taxon>Euteleostomi</taxon>
        <taxon>Mammalia</taxon>
        <taxon>Eutheria</taxon>
        <taxon>Euarchontoglires</taxon>
        <taxon>Glires</taxon>
        <taxon>Rodentia</taxon>
        <taxon>Myomorpha</taxon>
        <taxon>Muroidea</taxon>
        <taxon>Muridae</taxon>
        <taxon>Murinae</taxon>
        <taxon>Mus</taxon>
        <taxon>Mus</taxon>
    </lineage>
</organism>
<comment type="function">
    <text evidence="5 6 9 10 11">High affinity receptor for N-formyl-methionyl peptides (FMLP), which are powerful neutrophil chemotactic factors (PubMed:10477558, PubMed:12218158, PubMed:19387439). Stimulates chemotaxis in immune cells to site of infection or tissue damage upon recognition of several ligands, such as FMLP, or ligand involved in cell damage, disease or inflammation (PubMed:10477558, PubMed:19497865). Receptor for the chemokine-like protein FAM19A5, mediating FAM19A5-stimulated macrophage chemotaxis and the inhibitory effect on TNFSF11/RANKL-induced osteoclast differentiation (PubMed:29138422).</text>
</comment>
<comment type="subunit">
    <text evidence="1">Interacts with Amyloid-beta protein 42, product of APP; the interaction takes place at the cell surface and the complex is then rapidly internalized.</text>
</comment>
<comment type="subcellular location">
    <subcellularLocation>
        <location evidence="1">Cell membrane</location>
        <topology evidence="12">Multi-pass membrane protein</topology>
    </subcellularLocation>
    <text evidence="1">Associates with Amyloid-beta protein 42, product of APP, at the cell surface and the complex is then rapidly internalized.</text>
</comment>
<comment type="tissue specificity">
    <text evidence="5 7 8 9 10">Primarily expressed in neutrophils. Not detected in vomeronasal neurons.</text>
</comment>
<comment type="disruption phenotype">
    <text evidence="11">Blocks Fam19a5-stimulated macrophage chemotaxis and phosphorylation of Erk1 and Akt1 (PubMed:29138422). Suppression of Fam19a5-mediated inhibition of Rankl-induced osteoclast differentiation (PubMed:29138422).</text>
</comment>
<comment type="similarity">
    <text evidence="3">Belongs to the G-protein coupled receptor 1 family.</text>
</comment>
<name>FPR2_MOUSE</name>
<protein>
    <recommendedName>
        <fullName>Formyl peptide receptor 2</fullName>
    </recommendedName>
    <alternativeName>
        <fullName>Formylpeptide receptor-related sequence 2</fullName>
    </alternativeName>
    <alternativeName>
        <fullName>Lipoxin A4 receptor-like protein</fullName>
    </alternativeName>
    <alternativeName>
        <fullName>N-formylpeptide receptor-like 2</fullName>
    </alternativeName>
</protein>
<feature type="chain" id="PRO_0000382022" description="Formyl peptide receptor 2">
    <location>
        <begin position="1"/>
        <end position="351"/>
    </location>
</feature>
<feature type="topological domain" description="Extracellular" evidence="2">
    <location>
        <begin position="1"/>
        <end position="29"/>
    </location>
</feature>
<feature type="transmembrane region" description="Helical; Name=1" evidence="2">
    <location>
        <begin position="30"/>
        <end position="50"/>
    </location>
</feature>
<feature type="topological domain" description="Cytoplasmic" evidence="2">
    <location>
        <begin position="51"/>
        <end position="61"/>
    </location>
</feature>
<feature type="transmembrane region" description="Helical; Name=2" evidence="2">
    <location>
        <begin position="62"/>
        <end position="82"/>
    </location>
</feature>
<feature type="topological domain" description="Extracellular" evidence="2">
    <location>
        <begin position="83"/>
        <end position="99"/>
    </location>
</feature>
<feature type="transmembrane region" description="Helical; Name=3" evidence="2">
    <location>
        <begin position="100"/>
        <end position="120"/>
    </location>
</feature>
<feature type="topological domain" description="Cytoplasmic" evidence="2">
    <location>
        <begin position="121"/>
        <end position="144"/>
    </location>
</feature>
<feature type="transmembrane region" description="Helical; Name=4" evidence="2">
    <location>
        <begin position="145"/>
        <end position="165"/>
    </location>
</feature>
<feature type="topological domain" description="Extracellular" evidence="2">
    <location>
        <begin position="166"/>
        <end position="205"/>
    </location>
</feature>
<feature type="transmembrane region" description="Helical; Name=5" evidence="2">
    <location>
        <begin position="206"/>
        <end position="226"/>
    </location>
</feature>
<feature type="topological domain" description="Cytoplasmic" evidence="2">
    <location>
        <begin position="227"/>
        <end position="241"/>
    </location>
</feature>
<feature type="transmembrane region" description="Helical; Name=6" evidence="2">
    <location>
        <begin position="242"/>
        <end position="262"/>
    </location>
</feature>
<feature type="topological domain" description="Extracellular" evidence="2">
    <location>
        <begin position="263"/>
        <end position="282"/>
    </location>
</feature>
<feature type="transmembrane region" description="Helical; Name=7" evidence="2">
    <location>
        <begin position="283"/>
        <end position="305"/>
    </location>
</feature>
<feature type="topological domain" description="Cytoplasmic" evidence="2">
    <location>
        <begin position="306"/>
        <end position="351"/>
    </location>
</feature>
<feature type="region of interest" description="Disordered" evidence="4">
    <location>
        <begin position="325"/>
        <end position="351"/>
    </location>
</feature>
<feature type="compositionally biased region" description="Low complexity" evidence="4">
    <location>
        <begin position="327"/>
        <end position="341"/>
    </location>
</feature>
<feature type="glycosylation site" description="N-linked (GlcNAc...) asparagine" evidence="2">
    <location>
        <position position="4"/>
    </location>
</feature>
<feature type="glycosylation site" description="N-linked (GlcNAc...) asparagine" evidence="2">
    <location>
        <position position="10"/>
    </location>
</feature>
<feature type="disulfide bond" evidence="3">
    <location>
        <begin position="98"/>
        <end position="176"/>
    </location>
</feature>